<feature type="signal peptide" evidence="2">
    <location>
        <begin position="1"/>
        <end position="18"/>
    </location>
</feature>
<feature type="propeptide" id="PRO_0000459672" evidence="6">
    <location>
        <begin position="19"/>
        <end position="73"/>
    </location>
</feature>
<feature type="chain" id="PRO_5014266695" description="Delta-hexatoxin-Hi1a" evidence="6">
    <location>
        <begin position="74"/>
        <end position="115"/>
    </location>
</feature>
<feature type="disulfide bond" evidence="1">
    <location>
        <begin position="74"/>
        <end position="88"/>
    </location>
</feature>
<feature type="disulfide bond" evidence="1">
    <location>
        <begin position="81"/>
        <end position="93"/>
    </location>
</feature>
<feature type="disulfide bond" evidence="1">
    <location>
        <begin position="87"/>
        <end position="104"/>
    </location>
</feature>
<feature type="disulfide bond" evidence="1">
    <location>
        <begin position="89"/>
        <end position="115"/>
    </location>
</feature>
<proteinExistence type="evidence at protein level"/>
<comment type="function">
    <text evidence="1">Neurotoxin that slows inactivation of voltage-gated sodium channels (Nav). In vivo, is lethal to both vertebrates and insects.</text>
</comment>
<comment type="subcellular location">
    <subcellularLocation>
        <location evidence="3">Secreted</location>
    </subcellularLocation>
</comment>
<comment type="tissue specificity">
    <text evidence="6">Expressed by the venom gland.</text>
</comment>
<comment type="domain">
    <text evidence="5">The presence of a 'disulfide through disulfide knot' structurally defines this protein as a knottin.</text>
</comment>
<comment type="similarity">
    <text evidence="5">Belongs to the neurotoxin 06 (delta-actx) family.</text>
</comment>
<name>TDE1A_HADIN</name>
<dbReference type="EMBL" id="HACE01000001">
    <property type="protein sequence ID" value="CDZ18785.1"/>
    <property type="molecule type" value="mRNA"/>
</dbReference>
<dbReference type="EMBL" id="HACE01000011">
    <property type="protein sequence ID" value="CDZ18795.1"/>
    <property type="molecule type" value="mRNA"/>
</dbReference>
<dbReference type="EMBL" id="HACE01000029">
    <property type="protein sequence ID" value="CDZ18813.1"/>
    <property type="molecule type" value="mRNA"/>
</dbReference>
<dbReference type="EMBL" id="HACE01000037">
    <property type="protein sequence ID" value="CDZ18821.1"/>
    <property type="molecule type" value="mRNA"/>
</dbReference>
<dbReference type="EMBL" id="HACE01000043">
    <property type="protein sequence ID" value="CDZ18827.1"/>
    <property type="molecule type" value="mRNA"/>
</dbReference>
<dbReference type="EMBL" id="HACE01000052">
    <property type="protein sequence ID" value="CDZ18836.1"/>
    <property type="molecule type" value="mRNA"/>
</dbReference>
<dbReference type="EMBL" id="HACE01000113">
    <property type="protein sequence ID" value="CDZ18897.1"/>
    <property type="molecule type" value="mRNA"/>
</dbReference>
<dbReference type="SMR" id="A0A1D0BPK9"/>
<dbReference type="ArachnoServer" id="AS001406">
    <property type="toxin name" value="delta-hexatoxin-Hi1a"/>
</dbReference>
<dbReference type="GO" id="GO:0005576">
    <property type="term" value="C:extracellular region"/>
    <property type="evidence" value="ECO:0007669"/>
    <property type="project" value="UniProtKB-SubCell"/>
</dbReference>
<dbReference type="GO" id="GO:0019871">
    <property type="term" value="F:sodium channel inhibitor activity"/>
    <property type="evidence" value="ECO:0007669"/>
    <property type="project" value="InterPro"/>
</dbReference>
<dbReference type="GO" id="GO:0090729">
    <property type="term" value="F:toxin activity"/>
    <property type="evidence" value="ECO:0007669"/>
    <property type="project" value="UniProtKB-KW"/>
</dbReference>
<dbReference type="Gene3D" id="4.10.40.10">
    <property type="match status" value="1"/>
</dbReference>
<dbReference type="InterPro" id="IPR008017">
    <property type="entry name" value="Delta-hexatoxin"/>
</dbReference>
<dbReference type="Pfam" id="PF05353">
    <property type="entry name" value="Atracotoxin"/>
    <property type="match status" value="1"/>
</dbReference>
<dbReference type="SUPFAM" id="SSF57059">
    <property type="entry name" value="omega toxin-like"/>
    <property type="match status" value="1"/>
</dbReference>
<dbReference type="PROSITE" id="PS60018">
    <property type="entry name" value="DELTA_ACTX"/>
    <property type="match status" value="1"/>
</dbReference>
<keyword id="KW-0165">Cleavage on pair of basic residues</keyword>
<keyword id="KW-1015">Disulfide bond</keyword>
<keyword id="KW-0872">Ion channel impairing toxin</keyword>
<keyword id="KW-0960">Knottin</keyword>
<keyword id="KW-0528">Neurotoxin</keyword>
<keyword id="KW-0964">Secreted</keyword>
<keyword id="KW-0732">Signal</keyword>
<keyword id="KW-0800">Toxin</keyword>
<keyword id="KW-0738">Voltage-gated sodium channel impairing toxin</keyword>
<sequence length="115" mass="13223">MKVIATLYGLLFLTVVLGDITEGNENDLVENFREELSEADIPLLKKLEAIEDALLEKDFLPYEEEDRNARPKRCAKVRNWCAKNEDCCCPMKCIGAWYNQQSSCQSTFMGMFKKC</sequence>
<accession>A0A1D0BPK9</accession>
<reference key="1">
    <citation type="journal article" date="2020" name="Proc. Natl. Acad. Sci. U.S.A.">
        <title>Structural venomics reveals evolution of a complex venom by duplication and diversification of an ancient peptide-encoding gene.</title>
        <authorList>
            <person name="Pineda S.S."/>
            <person name="Chin Y.K."/>
            <person name="Undheim E.A.B."/>
            <person name="Senff S."/>
            <person name="Mobli M."/>
            <person name="Dauly C."/>
            <person name="Escoubas P."/>
            <person name="Nicholson G.M."/>
            <person name="Kaas Q."/>
            <person name="Guo S."/>
            <person name="Herzig V."/>
            <person name="Mattick J.S."/>
            <person name="King G.F."/>
        </authorList>
    </citation>
    <scope>NUCLEOTIDE SEQUENCE [MRNA]</scope>
    <scope>IDENTIFICATION BY MASS SPECTROMETRY</scope>
    <scope>SUBCELLULAR LOCATION</scope>
    <source>
        <tissue>Venom</tissue>
        <tissue>Venom gland</tissue>
    </source>
</reference>
<reference evidence="7" key="2">
    <citation type="thesis" date="2012" institute="The University of Queensland" country="Australia">
        <title>Probing the chemical diversity of venom from the Australian Funnel-web spider Hadronyche infensa.</title>
        <authorList>
            <person name="Pineda S.S."/>
        </authorList>
    </citation>
    <scope>NUCLEOTIDE SEQUENCE [MRNA]</scope>
    <source>
        <tissue>Venom gland</tissue>
    </source>
</reference>
<reference evidence="7" key="3">
    <citation type="submission" date="2014-07" db="EMBL/GenBank/DDBJ databases">
        <authorList>
            <person name="Zhang J.E."/>
            <person name="Yang H."/>
            <person name="Guo J."/>
            <person name="Deng Z."/>
            <person name="Luo H."/>
            <person name="Luo M."/>
            <person name="Zhao B."/>
        </authorList>
    </citation>
    <scope>NUCLEOTIDE SEQUENCE [MRNA]</scope>
    <source>
        <tissue>Venom gland</tissue>
    </source>
</reference>
<organism evidence="7">
    <name type="scientific">Hadronyche infensa</name>
    <name type="common">Fraser island funnel-web spider</name>
    <name type="synonym">Atrax infensus</name>
    <dbReference type="NCBI Taxonomy" id="153481"/>
    <lineage>
        <taxon>Eukaryota</taxon>
        <taxon>Metazoa</taxon>
        <taxon>Ecdysozoa</taxon>
        <taxon>Arthropoda</taxon>
        <taxon>Chelicerata</taxon>
        <taxon>Arachnida</taxon>
        <taxon>Araneae</taxon>
        <taxon>Mygalomorphae</taxon>
        <taxon>Hexathelidae</taxon>
        <taxon>Hadronyche</taxon>
    </lineage>
</organism>
<evidence type="ECO:0000250" key="1">
    <source>
        <dbReference type="UniProtKB" id="P13494"/>
    </source>
</evidence>
<evidence type="ECO:0000255" key="2"/>
<evidence type="ECO:0000269" key="3">
    <source>
    </source>
</evidence>
<evidence type="ECO:0000303" key="4">
    <source>
    </source>
</evidence>
<evidence type="ECO:0000305" key="5"/>
<evidence type="ECO:0000305" key="6">
    <source>
    </source>
</evidence>
<evidence type="ECO:0000312" key="7">
    <source>
        <dbReference type="EMBL" id="CDZ18785.1"/>
    </source>
</evidence>
<protein>
    <recommendedName>
        <fullName evidence="4">Delta-hexatoxin-Hi1a</fullName>
        <shortName evidence="4">Delta-HXTX-Hi1a</shortName>
    </recommendedName>
    <alternativeName>
        <fullName evidence="4">SF13 peptide</fullName>
    </alternativeName>
</protein>